<protein>
    <recommendedName>
        <fullName>Uncharacterized protein R00649</fullName>
    </recommendedName>
</protein>
<proteinExistence type="predicted"/>
<organism>
    <name type="scientific">Rhizobium meliloti (strain 1021)</name>
    <name type="common">Ensifer meliloti</name>
    <name type="synonym">Sinorhizobium meliloti</name>
    <dbReference type="NCBI Taxonomy" id="266834"/>
    <lineage>
        <taxon>Bacteria</taxon>
        <taxon>Pseudomonadati</taxon>
        <taxon>Pseudomonadota</taxon>
        <taxon>Alphaproteobacteria</taxon>
        <taxon>Hyphomicrobiales</taxon>
        <taxon>Rhizobiaceae</taxon>
        <taxon>Sinorhizobium/Ensifer group</taxon>
        <taxon>Sinorhizobium</taxon>
    </lineage>
</organism>
<dbReference type="EMBL" id="AJ224445">
    <property type="protein sequence ID" value="CAA11950.1"/>
    <property type="molecule type" value="Genomic_DNA"/>
</dbReference>
<dbReference type="EMBL" id="AL591688">
    <property type="protein sequence ID" value="CAC45221.1"/>
    <property type="molecule type" value="Genomic_DNA"/>
</dbReference>
<dbReference type="RefSeq" id="NP_384755.1">
    <property type="nucleotide sequence ID" value="NC_003047.1"/>
</dbReference>
<dbReference type="RefSeq" id="WP_010968724.1">
    <property type="nucleotide sequence ID" value="NC_003047.1"/>
</dbReference>
<dbReference type="EnsemblBacteria" id="CAC45221">
    <property type="protein sequence ID" value="CAC45221"/>
    <property type="gene ID" value="SMc03017"/>
</dbReference>
<dbReference type="KEGG" id="sme:SMc03017"/>
<dbReference type="PATRIC" id="fig|266834.11.peg.2022"/>
<dbReference type="eggNOG" id="ENOG5032UF1">
    <property type="taxonomic scope" value="Bacteria"/>
</dbReference>
<dbReference type="HOGENOM" id="CLU_129708_0_0_5"/>
<dbReference type="OrthoDB" id="7862614at2"/>
<dbReference type="Proteomes" id="UP000001976">
    <property type="component" value="Chromosome"/>
</dbReference>
<dbReference type="InterPro" id="IPR017024">
    <property type="entry name" value="UCP034217"/>
</dbReference>
<dbReference type="PIRSF" id="PIRSF034217">
    <property type="entry name" value="UCP034217_Mll2898"/>
    <property type="match status" value="1"/>
</dbReference>
<evidence type="ECO:0000305" key="1"/>
<accession>O54242</accession>
<accession>Q92S01</accession>
<sequence>MILKKCQFSEEREQIVAEAIRPVATELRLIDAADFIALLRFESYASIADLVESAAELYFLPGTVNFGLGGNYNLDWDSRPEVILDLELKPRGVTVYARLVLAGDTAGIEISHINFQQPSGDPDENTAFLAKSLAESKFVKTYPLPLAS</sequence>
<feature type="chain" id="PRO_0000160640" description="Uncharacterized protein R00649">
    <location>
        <begin position="1"/>
        <end position="148"/>
    </location>
</feature>
<feature type="sequence conflict" description="In Ref. 1; CAA11950." evidence="1" ref="1">
    <original>S</original>
    <variation>T</variation>
    <location>
        <position position="78"/>
    </location>
</feature>
<feature type="sequence conflict" description="In Ref. 1; CAA11950." evidence="1" ref="1">
    <original>D</original>
    <variation>N</variation>
    <location>
        <position position="121"/>
    </location>
</feature>
<feature type="sequence conflict" description="In Ref. 1; CAA11950." evidence="1" ref="1">
    <original>S</original>
    <variation>A</variation>
    <location>
        <position position="136"/>
    </location>
</feature>
<reference key="1">
    <citation type="journal article" date="1998" name="Gene">
        <title>Mapping of 41 chemotaxis, flagellar and motility genes to a single region of the Sinorhizobium meliloti chromosome.</title>
        <authorList>
            <person name="Sourjik V."/>
            <person name="Sterr W."/>
            <person name="Platzer J."/>
            <person name="Bos I."/>
            <person name="Haslbeck M."/>
            <person name="Schmitt R."/>
        </authorList>
    </citation>
    <scope>NUCLEOTIDE SEQUENCE [GENOMIC DNA]</scope>
    <source>
        <strain>RU11/001</strain>
    </source>
</reference>
<reference key="2">
    <citation type="journal article" date="2001" name="Proc. Natl. Acad. Sci. U.S.A.">
        <title>Analysis of the chromosome sequence of the legume symbiont Sinorhizobium meliloti strain 1021.</title>
        <authorList>
            <person name="Capela D."/>
            <person name="Barloy-Hubler F."/>
            <person name="Gouzy J."/>
            <person name="Bothe G."/>
            <person name="Ampe F."/>
            <person name="Batut J."/>
            <person name="Boistard P."/>
            <person name="Becker A."/>
            <person name="Boutry M."/>
            <person name="Cadieu E."/>
            <person name="Dreano S."/>
            <person name="Gloux S."/>
            <person name="Godrie T."/>
            <person name="Goffeau A."/>
            <person name="Kahn D."/>
            <person name="Kiss E."/>
            <person name="Lelaure V."/>
            <person name="Masuy D."/>
            <person name="Pohl T."/>
            <person name="Portetelle D."/>
            <person name="Puehler A."/>
            <person name="Purnelle B."/>
            <person name="Ramsperger U."/>
            <person name="Renard C."/>
            <person name="Thebault P."/>
            <person name="Vandenbol M."/>
            <person name="Weidner S."/>
            <person name="Galibert F."/>
        </authorList>
    </citation>
    <scope>NUCLEOTIDE SEQUENCE [LARGE SCALE GENOMIC DNA]</scope>
    <source>
        <strain>1021</strain>
    </source>
</reference>
<reference key="3">
    <citation type="journal article" date="2001" name="Science">
        <title>The composite genome of the legume symbiont Sinorhizobium meliloti.</title>
        <authorList>
            <person name="Galibert F."/>
            <person name="Finan T.M."/>
            <person name="Long S.R."/>
            <person name="Puehler A."/>
            <person name="Abola P."/>
            <person name="Ampe F."/>
            <person name="Barloy-Hubler F."/>
            <person name="Barnett M.J."/>
            <person name="Becker A."/>
            <person name="Boistard P."/>
            <person name="Bothe G."/>
            <person name="Boutry M."/>
            <person name="Bowser L."/>
            <person name="Buhrmester J."/>
            <person name="Cadieu E."/>
            <person name="Capela D."/>
            <person name="Chain P."/>
            <person name="Cowie A."/>
            <person name="Davis R.W."/>
            <person name="Dreano S."/>
            <person name="Federspiel N.A."/>
            <person name="Fisher R.F."/>
            <person name="Gloux S."/>
            <person name="Godrie T."/>
            <person name="Goffeau A."/>
            <person name="Golding B."/>
            <person name="Gouzy J."/>
            <person name="Gurjal M."/>
            <person name="Hernandez-Lucas I."/>
            <person name="Hong A."/>
            <person name="Huizar L."/>
            <person name="Hyman R.W."/>
            <person name="Jones T."/>
            <person name="Kahn D."/>
            <person name="Kahn M.L."/>
            <person name="Kalman S."/>
            <person name="Keating D.H."/>
            <person name="Kiss E."/>
            <person name="Komp C."/>
            <person name="Lelaure V."/>
            <person name="Masuy D."/>
            <person name="Palm C."/>
            <person name="Peck M.C."/>
            <person name="Pohl T.M."/>
            <person name="Portetelle D."/>
            <person name="Purnelle B."/>
            <person name="Ramsperger U."/>
            <person name="Surzycki R."/>
            <person name="Thebault P."/>
            <person name="Vandenbol M."/>
            <person name="Vorhoelter F.J."/>
            <person name="Weidner S."/>
            <person name="Wells D.H."/>
            <person name="Wong K."/>
            <person name="Yeh K.-C."/>
            <person name="Batut J."/>
        </authorList>
    </citation>
    <scope>NUCLEOTIDE SEQUENCE [LARGE SCALE GENOMIC DNA]</scope>
    <source>
        <strain>1021</strain>
    </source>
</reference>
<name>Y649_RHIME</name>
<comment type="similarity">
    <text evidence="1">To A.tumefaciens Atu0565/AGR_C_992.</text>
</comment>
<keyword id="KW-1185">Reference proteome</keyword>
<gene>
    <name type="ordered locus">R00649</name>
    <name type="ORF">SMc03017</name>
</gene>